<reference key="1">
    <citation type="journal article" date="1996" name="DNA Res.">
        <title>A 460-kb DNA sequence of the Escherichia coli K-12 genome corresponding to the 40.1-50.0 min region on the linkage map.</title>
        <authorList>
            <person name="Itoh T."/>
            <person name="Aiba H."/>
            <person name="Baba T."/>
            <person name="Fujita K."/>
            <person name="Hayashi K."/>
            <person name="Inada T."/>
            <person name="Isono K."/>
            <person name="Kasai H."/>
            <person name="Kimura S."/>
            <person name="Kitakawa M."/>
            <person name="Kitagawa M."/>
            <person name="Makino K."/>
            <person name="Miki T."/>
            <person name="Mizobuchi K."/>
            <person name="Mori H."/>
            <person name="Mori T."/>
            <person name="Motomura K."/>
            <person name="Nakade S."/>
            <person name="Nakamura Y."/>
            <person name="Nashimoto H."/>
            <person name="Nishio Y."/>
            <person name="Oshima T."/>
            <person name="Saito N."/>
            <person name="Sampei G."/>
            <person name="Seki Y."/>
            <person name="Sivasundaram S."/>
            <person name="Tagami H."/>
            <person name="Takeda J."/>
            <person name="Takemoto K."/>
            <person name="Wada C."/>
            <person name="Yamamoto Y."/>
            <person name="Horiuchi T."/>
        </authorList>
    </citation>
    <scope>NUCLEOTIDE SEQUENCE [LARGE SCALE GENOMIC DNA]</scope>
    <source>
        <strain>K12 / W3110 / ATCC 27325 / DSM 5911</strain>
    </source>
</reference>
<reference key="2">
    <citation type="journal article" date="1997" name="Science">
        <title>The complete genome sequence of Escherichia coli K-12.</title>
        <authorList>
            <person name="Blattner F.R."/>
            <person name="Plunkett G. III"/>
            <person name="Bloch C.A."/>
            <person name="Perna N.T."/>
            <person name="Burland V."/>
            <person name="Riley M."/>
            <person name="Collado-Vides J."/>
            <person name="Glasner J.D."/>
            <person name="Rode C.K."/>
            <person name="Mayhew G.F."/>
            <person name="Gregor J."/>
            <person name="Davis N.W."/>
            <person name="Kirkpatrick H.A."/>
            <person name="Goeden M.A."/>
            <person name="Rose D.J."/>
            <person name="Mau B."/>
            <person name="Shao Y."/>
        </authorList>
    </citation>
    <scope>NUCLEOTIDE SEQUENCE [LARGE SCALE GENOMIC DNA]</scope>
    <source>
        <strain>K12 / MG1655 / ATCC 47076</strain>
    </source>
</reference>
<reference key="3">
    <citation type="journal article" date="2006" name="Mol. Syst. Biol.">
        <title>Highly accurate genome sequences of Escherichia coli K-12 strains MG1655 and W3110.</title>
        <authorList>
            <person name="Hayashi K."/>
            <person name="Morooka N."/>
            <person name="Yamamoto Y."/>
            <person name="Fujita K."/>
            <person name="Isono K."/>
            <person name="Choi S."/>
            <person name="Ohtsubo E."/>
            <person name="Baba T."/>
            <person name="Wanner B.L."/>
            <person name="Mori H."/>
            <person name="Horiuchi T."/>
        </authorList>
    </citation>
    <scope>NUCLEOTIDE SEQUENCE [LARGE SCALE GENOMIC DNA]</scope>
    <source>
        <strain>K12 / W3110 / ATCC 27325 / DSM 5911</strain>
    </source>
</reference>
<reference key="4">
    <citation type="journal article" date="2017" name="Cell">
        <title>Architectures of lipid transport systems for the bacterial outer membrane.</title>
        <authorList>
            <person name="Ekiert D.C."/>
            <person name="Bhabha G."/>
            <person name="Isom G.L."/>
            <person name="Greenan G."/>
            <person name="Ovchinnikov S."/>
            <person name="Henderson I.R."/>
            <person name="Cox J.S."/>
            <person name="Vale R.D."/>
        </authorList>
    </citation>
    <scope>FUNCTION</scope>
    <scope>SUBUNIT</scope>
    <scope>DOMAIN</scope>
    <source>
        <strain>K12</strain>
    </source>
</reference>
<reference key="5">
    <citation type="journal article" date="2017" name="J. Bacteriol.">
        <title>pqiABC and yebST, putative mce operons of Escherichia coli, encode transport pathways and contribute to membrane integrity.</title>
        <authorList>
            <person name="Nakayama T."/>
            <person name="Zhang-Akiyama Q.M."/>
        </authorList>
    </citation>
    <scope>FUNCTION</scope>
    <scope>SUBUNIT</scope>
    <scope>SUBCELLULAR LOCATION</scope>
    <scope>TOPOLOGY</scope>
    <scope>INDUCTION</scope>
</reference>
<reference key="6">
    <citation type="journal article" date="2017" name="Sci. Rep.">
        <title>MCE domain proteins: conserved inner membrane lipid-binding proteins required for outer membrane homeostasis.</title>
        <authorList>
            <person name="Isom G.L."/>
            <person name="Davies N.J."/>
            <person name="Chong Z.S."/>
            <person name="Bryant J.A."/>
            <person name="Jamshad M."/>
            <person name="Sharif M."/>
            <person name="Cunningham A.F."/>
            <person name="Knowles T.J."/>
            <person name="Chng S.S."/>
            <person name="Cole J.A."/>
            <person name="Henderson I.R."/>
        </authorList>
    </citation>
    <scope>FUNCTION</scope>
    <scope>SUBCELLULAR LOCATION</scope>
    <scope>DISRUPTION PHENOTYPE</scope>
</reference>
<reference evidence="16 17 18 19 20 21 22 23 24" key="7">
    <citation type="journal article" date="2020" name="Cell">
        <title>LetB Structure Reveals a Tunnel for Lipid Transport across the Bacterial Envelope.</title>
        <authorList>
            <person name="Isom G.L."/>
            <person name="Coudray N."/>
            <person name="MacRae M.R."/>
            <person name="McManus C.T."/>
            <person name="Ekiert D.C."/>
            <person name="Bhabha G."/>
        </authorList>
    </citation>
    <scope>STRUCTURE BY ELECTRON MICROSCOPY (2.96 ANGSTROMS) OF 46-877 IN OPEN AND CLOSED STATES</scope>
    <scope>X-RAY CRYSTALLOGRAPHY (2.15 ANGSTROMS) OF 159-383</scope>
    <scope>FUNCTION</scope>
    <scope>NOMENCLATURE</scope>
    <scope>SUBUNIT</scope>
    <scope>SUBCELLULAR LOCATION</scope>
    <scope>DOMAIN</scope>
    <scope>MUTAGENESIS OF LEU-243; LEU-246; VAL-247; LEU-355; LEU-358 AND LEU-359</scope>
</reference>
<reference evidence="14 15" key="8">
    <citation type="journal article" date="2020" name="J. Mol. Biol.">
        <title>Cryo-EM Structure of a Bacterial Lipid Transporter YebT.</title>
        <authorList>
            <person name="Liu C."/>
            <person name="Ma J."/>
            <person name="Wang J."/>
            <person name="Wang H."/>
            <person name="Zhang L."/>
        </authorList>
    </citation>
    <scope>STRUCTURE BY ELECTRON MICROSCOPY (3.00 ANGSTROMS) OF 46-509 AND 512-877</scope>
    <scope>FUNCTION</scope>
    <scope>SUBUNIT</scope>
    <scope>DOMAIN</scope>
</reference>
<reference evidence="25 26" key="9">
    <citation type="journal article" date="2022" name="J. Mol. Biol.">
        <title>Role of Ring6 in the Function of the E. coli MCE Protein LetB.</title>
        <authorList>
            <person name="Vieni C."/>
            <person name="Coudray N."/>
            <person name="Isom G.L."/>
            <person name="Bhabha G."/>
            <person name="Ekiert D.C."/>
        </authorList>
    </citation>
    <scope>STRUCTURE BY ELECTRON MICROSCOPY (3.20 ANGSTROMS) OF 42-877 OF RING 6 MUTANTS</scope>
    <scope>SUBUNIT</scope>
    <scope>DOMAIN</scope>
    <scope>MUTAGENESIS OF LEU-123; LEU-126; VAL-127; LEU-243; LEU-246; VAL-247; LEU-355; LEU-358; LEU-359; ALA-473; TRP-476; ILE-477; LEU-595; ALA-598; LEU-599; PRO-701; ILE-703; ALA-705; ALA-706; GLY-707; VAL-708; LEU-711; ILE-714; LEU-715; PRO-717; PHE-830; PHE-833 AND ILE-834</scope>
</reference>
<keyword id="KW-0002">3D-structure</keyword>
<keyword id="KW-0997">Cell inner membrane</keyword>
<keyword id="KW-1003">Cell membrane</keyword>
<keyword id="KW-0445">Lipid transport</keyword>
<keyword id="KW-0472">Membrane</keyword>
<keyword id="KW-1185">Reference proteome</keyword>
<keyword id="KW-0677">Repeat</keyword>
<keyword id="KW-0812">Transmembrane</keyword>
<keyword id="KW-1133">Transmembrane helix</keyword>
<keyword id="KW-0813">Transport</keyword>
<proteinExistence type="evidence at protein level"/>
<accession>P76272</accession>
<accession>P97190</accession>
<accession>P97191</accession>
<protein>
    <recommendedName>
        <fullName evidence="9">Lipophilic envelope-spanning tunnel protein B</fullName>
    </recommendedName>
    <alternativeName>
        <fullName evidence="11">Intermembrane transport protein LetB</fullName>
    </alternativeName>
    <alternativeName>
        <fullName evidence="8">Lipid transporter YebT</fullName>
    </alternativeName>
</protein>
<sequence length="877" mass="94970">MSQETPASTTEAQIKNKRRISPFWLLPFIALMIASWLIWDSYQDRGNTVTIDFMSADGIVPGRTPVRYQGVEVGTVQDISLSDDLRKIEVKVSIKSDMKDALREETQFWLVTPKASLAGVSGLDALVGGNYIGMMPGKGKEQDHFVALDTQPKYRLDNGDLMIHLQAPDLGSLNSGSLVYFRKIPVGKVYDYAINPNKQGVVIDVLIERRFTDLVKKGSRFWNVSGVDANVSISGAKVKLESLAALVNGAIAFDSPEESKPAEAEDTFGLYEDLAHSQRGVIIKLELPSGAGLTADSTPLMYQGLEVGQLTKLDLNPGGKVTGEMTVDPSVVTLLRENTRIELRNPKLSLSDANLSALLTGKTFELVPGDGEPRKEFVVVPGEKALLHEPDVLTLTLTAPESYGIDAGQPLILHGVQVGQVIDRKLTSKGVTFTVAIEPQHRELVKGDSKFVVNSRVDVKVGLDGVEFLGASASEWINGGIRILPGDKGEMKASYPLYANLEKALENSLSDLPTTTVSLSAETLPDVQAGSVVLYRKFEVGEVITVRPRANAFDIDLHIKPEYRNLLTSNSVFWAEGGAKVQLNGSGLTVQASPLSRALKGAISFDNLSGASASQRKGDKRILYASETAARAVGGQITLHAFDAGKLAVGMPIRYLGIDIGQIQTLDLITARNEVQAKAVLYPEYVQTFARGGTRFSVVTPQISAAGVEHLDTILQPYINVEPGRGNPRRDFELQEATITDSRYLDGLSIIVEAPEAGSLGIGTPVLFRGLEVGTVTGMTLGTLSDRVMIAMRISKRYQHLVRNNSVFWLASGYSLDFGLTGGVVKTGTFNQFIRGGIAFATPPGTPLAPKAQEGKHFLLQESEPKEWREWGTALPK</sequence>
<evidence type="ECO:0000255" key="1"/>
<evidence type="ECO:0000269" key="2">
    <source>
    </source>
</evidence>
<evidence type="ECO:0000269" key="3">
    <source>
    </source>
</evidence>
<evidence type="ECO:0000269" key="4">
    <source>
    </source>
</evidence>
<evidence type="ECO:0000269" key="5">
    <source>
    </source>
</evidence>
<evidence type="ECO:0000269" key="6">
    <source>
    </source>
</evidence>
<evidence type="ECO:0000269" key="7">
    <source>
    </source>
</evidence>
<evidence type="ECO:0000303" key="8">
    <source>
    </source>
</evidence>
<evidence type="ECO:0000303" key="9">
    <source>
    </source>
</evidence>
<evidence type="ECO:0000303" key="10">
    <source>
    </source>
</evidence>
<evidence type="ECO:0000305" key="11"/>
<evidence type="ECO:0000305" key="12">
    <source>
    </source>
</evidence>
<evidence type="ECO:0000305" key="13">
    <source>
    </source>
</evidence>
<evidence type="ECO:0007744" key="14">
    <source>
        <dbReference type="PDB" id="6KZ3"/>
    </source>
</evidence>
<evidence type="ECO:0007744" key="15">
    <source>
        <dbReference type="PDB" id="6KZ4"/>
    </source>
</evidence>
<evidence type="ECO:0007744" key="16">
    <source>
        <dbReference type="PDB" id="6V0C"/>
    </source>
</evidence>
<evidence type="ECO:0007744" key="17">
    <source>
        <dbReference type="PDB" id="6V0D"/>
    </source>
</evidence>
<evidence type="ECO:0007744" key="18">
    <source>
        <dbReference type="PDB" id="6V0E"/>
    </source>
</evidence>
<evidence type="ECO:0007744" key="19">
    <source>
        <dbReference type="PDB" id="6V0F"/>
    </source>
</evidence>
<evidence type="ECO:0007744" key="20">
    <source>
        <dbReference type="PDB" id="6V0G"/>
    </source>
</evidence>
<evidence type="ECO:0007744" key="21">
    <source>
        <dbReference type="PDB" id="6V0H"/>
    </source>
</evidence>
<evidence type="ECO:0007744" key="22">
    <source>
        <dbReference type="PDB" id="6V0I"/>
    </source>
</evidence>
<evidence type="ECO:0007744" key="23">
    <source>
        <dbReference type="PDB" id="6V0J"/>
    </source>
</evidence>
<evidence type="ECO:0007744" key="24">
    <source>
        <dbReference type="PDB" id="6VCI"/>
    </source>
</evidence>
<evidence type="ECO:0007744" key="25">
    <source>
        <dbReference type="PDB" id="7SEE"/>
    </source>
</evidence>
<evidence type="ECO:0007744" key="26">
    <source>
        <dbReference type="PDB" id="7SEF"/>
    </source>
</evidence>
<evidence type="ECO:0007829" key="27">
    <source>
        <dbReference type="PDB" id="6KZ3"/>
    </source>
</evidence>
<evidence type="ECO:0007829" key="28">
    <source>
        <dbReference type="PDB" id="6KZ4"/>
    </source>
</evidence>
<evidence type="ECO:0007829" key="29">
    <source>
        <dbReference type="PDB" id="6V0D"/>
    </source>
</evidence>
<evidence type="ECO:0007829" key="30">
    <source>
        <dbReference type="PDB" id="6V0E"/>
    </source>
</evidence>
<evidence type="ECO:0007829" key="31">
    <source>
        <dbReference type="PDB" id="6V0F"/>
    </source>
</evidence>
<evidence type="ECO:0007829" key="32">
    <source>
        <dbReference type="PDB" id="6V0G"/>
    </source>
</evidence>
<evidence type="ECO:0007829" key="33">
    <source>
        <dbReference type="PDB" id="6VCI"/>
    </source>
</evidence>
<evidence type="ECO:0007829" key="34">
    <source>
        <dbReference type="PDB" id="7SEE"/>
    </source>
</evidence>
<organism>
    <name type="scientific">Escherichia coli (strain K12)</name>
    <dbReference type="NCBI Taxonomy" id="83333"/>
    <lineage>
        <taxon>Bacteria</taxon>
        <taxon>Pseudomonadati</taxon>
        <taxon>Pseudomonadota</taxon>
        <taxon>Gammaproteobacteria</taxon>
        <taxon>Enterobacterales</taxon>
        <taxon>Enterobacteriaceae</taxon>
        <taxon>Escherichia</taxon>
    </lineage>
</organism>
<gene>
    <name evidence="9" type="primary">letB</name>
    <name evidence="10" type="synonym">yebT</name>
    <name type="ordered locus">b1834</name>
    <name type="ordered locus">JW1823</name>
</gene>
<feature type="chain" id="PRO_0000169055" description="Lipophilic envelope-spanning tunnel protein B">
    <location>
        <begin position="1"/>
        <end position="877"/>
    </location>
</feature>
<feature type="topological domain" description="Cytoplasmic" evidence="12">
    <location>
        <begin position="1"/>
        <end position="19"/>
    </location>
</feature>
<feature type="transmembrane region" description="Helical" evidence="1">
    <location>
        <begin position="20"/>
        <end position="40"/>
    </location>
</feature>
<feature type="topological domain" description="Periplasmic" evidence="2">
    <location>
        <begin position="41"/>
        <end position="877"/>
    </location>
</feature>
<feature type="region of interest" description="MCE/MlaD 1" evidence="13">
    <location>
        <begin position="46"/>
        <end position="149"/>
    </location>
</feature>
<feature type="region of interest" description="MCE/MlaD 2" evidence="13">
    <location>
        <begin position="160"/>
        <end position="272"/>
    </location>
</feature>
<feature type="region of interest" description="MCE/MlaD 3" evidence="13">
    <location>
        <begin position="279"/>
        <end position="382"/>
    </location>
</feature>
<feature type="region of interest" description="MCE/MlaD 4" evidence="13">
    <location>
        <begin position="391"/>
        <end position="499"/>
    </location>
</feature>
<feature type="region of interest" description="MCE/MlaD 5" evidence="13">
    <location>
        <begin position="515"/>
        <end position="625"/>
    </location>
</feature>
<feature type="region of interest" description="MCE/MlaD 6" evidence="13">
    <location>
        <begin position="634"/>
        <end position="737"/>
    </location>
</feature>
<feature type="region of interest" description="MCE/MlaD 7" evidence="13">
    <location>
        <begin position="746"/>
        <end position="862"/>
    </location>
</feature>
<feature type="mutagenesis site" description="Loss of activity." evidence="7">
    <original>L</original>
    <variation>N</variation>
    <location>
        <position position="123"/>
    </location>
</feature>
<feature type="mutagenesis site" description="Loss of activity." evidence="7">
    <original>L</original>
    <variation>N</variation>
    <location>
        <position position="126"/>
    </location>
</feature>
<feature type="mutagenesis site" description="Loss of activity." evidence="7">
    <original>V</original>
    <variation>N</variation>
    <location>
        <position position="127"/>
    </location>
</feature>
<feature type="mutagenesis site" description="Well folded and assembled into a hexameric structure, but loses its function." evidence="6 7">
    <original>L</original>
    <variation>N</variation>
    <location>
        <position position="243"/>
    </location>
</feature>
<feature type="mutagenesis site" description="Well folded and assembled into a hexameric structure, but loses its function." evidence="6 7">
    <original>L</original>
    <variation>N</variation>
    <location>
        <position position="246"/>
    </location>
</feature>
<feature type="mutagenesis site" description="Well folded and assembled into a hexameric structure, but loses its function." evidence="6 7">
    <original>V</original>
    <variation>N</variation>
    <location>
        <position position="247"/>
    </location>
</feature>
<feature type="mutagenesis site" description="Well folded and assembled into a hexameric structure, but loses its function." evidence="6 7">
    <original>L</original>
    <variation>N</variation>
    <location>
        <position position="355"/>
    </location>
</feature>
<feature type="mutagenesis site" description="Well folded and assembled into a hexameric structure, but loses its function." evidence="6 7">
    <original>L</original>
    <variation>N</variation>
    <location>
        <position position="358"/>
    </location>
</feature>
<feature type="mutagenesis site" description="Well folded and assembled into a hexameric structure, but loses its function." evidence="6 7">
    <original>L</original>
    <variation>N</variation>
    <location>
        <position position="359"/>
    </location>
</feature>
<feature type="mutagenesis site" description="Loss of activity." evidence="7">
    <original>A</original>
    <variation>N</variation>
    <location>
        <position position="473"/>
    </location>
</feature>
<feature type="mutagenesis site" description="Loss of activity." evidence="7">
    <original>W</original>
    <variation>N</variation>
    <location>
        <position position="476"/>
    </location>
</feature>
<feature type="mutagenesis site" description="Loss of activity." evidence="7">
    <original>I</original>
    <variation>N</variation>
    <location>
        <position position="477"/>
    </location>
</feature>
<feature type="mutagenesis site" description="Loss of activity." evidence="7">
    <original>L</original>
    <variation>N</variation>
    <location>
        <position position="595"/>
    </location>
</feature>
<feature type="mutagenesis site" description="Loss of activity." evidence="7">
    <original>A</original>
    <variation>N</variation>
    <location>
        <position position="598"/>
    </location>
</feature>
<feature type="mutagenesis site" description="Loss of activity." evidence="7">
    <original>L</original>
    <variation>N</variation>
    <location>
        <position position="599"/>
    </location>
</feature>
<feature type="mutagenesis site" description="Loss of activity." evidence="7">
    <original>P</original>
    <variation>N</variation>
    <location>
        <position position="701"/>
    </location>
</feature>
<feature type="mutagenesis site" description="Does not affect function." evidence="7">
    <original>I</original>
    <variation>N</variation>
    <location>
        <position position="703"/>
    </location>
</feature>
<feature type="mutagenesis site" description="Does not affect function." evidence="7">
    <original>A</original>
    <variation>N</variation>
    <location>
        <position position="705"/>
    </location>
</feature>
<feature type="mutagenesis site" description="Does not affect function." evidence="7">
    <original>A</original>
    <variation>N</variation>
    <location>
        <position position="706"/>
    </location>
</feature>
<feature type="mutagenesis site" description="Partially affects function." evidence="7">
    <original>G</original>
    <variation>N</variation>
    <location>
        <position position="707"/>
    </location>
</feature>
<feature type="mutagenesis site" description="Loss of activity." evidence="7">
    <original>V</original>
    <variation>N</variation>
    <location>
        <position position="708"/>
    </location>
</feature>
<feature type="mutagenesis site" description="Loss of activity." evidence="7">
    <original>L</original>
    <variation>N</variation>
    <location>
        <position position="711"/>
    </location>
</feature>
<feature type="mutagenesis site" description="Loss of activity." evidence="7">
    <original>I</original>
    <variation>N</variation>
    <location>
        <position position="714"/>
    </location>
</feature>
<feature type="mutagenesis site" description="Loss of activity." evidence="7">
    <original>L</original>
    <variation>N</variation>
    <location>
        <position position="715"/>
    </location>
</feature>
<feature type="mutagenesis site" description="Does not affect function." evidence="7">
    <original>P</original>
    <variation>N</variation>
    <location>
        <position position="717"/>
    </location>
</feature>
<feature type="mutagenesis site" description="Loss of activity." evidence="7">
    <original>F</original>
    <variation>N</variation>
    <location>
        <position position="830"/>
    </location>
</feature>
<feature type="mutagenesis site" description="Loss of activity." evidence="7">
    <original>F</original>
    <variation>N</variation>
    <location>
        <position position="833"/>
    </location>
</feature>
<feature type="mutagenesis site" description="Loss of activity." evidence="7">
    <original>I</original>
    <variation>N</variation>
    <location>
        <position position="834"/>
    </location>
</feature>
<feature type="strand" evidence="32">
    <location>
        <begin position="49"/>
        <end position="54"/>
    </location>
</feature>
<feature type="strand" evidence="32">
    <location>
        <begin position="61"/>
        <end position="63"/>
    </location>
</feature>
<feature type="strand" evidence="32">
    <location>
        <begin position="65"/>
        <end position="68"/>
    </location>
</feature>
<feature type="strand" evidence="32">
    <location>
        <begin position="71"/>
        <end position="82"/>
    </location>
</feature>
<feature type="helix" evidence="32">
    <location>
        <begin position="84"/>
        <end position="86"/>
    </location>
</feature>
<feature type="strand" evidence="32">
    <location>
        <begin position="87"/>
        <end position="94"/>
    </location>
</feature>
<feature type="helix" evidence="32">
    <location>
        <begin position="96"/>
        <end position="101"/>
    </location>
</feature>
<feature type="strand" evidence="32">
    <location>
        <begin position="107"/>
        <end position="111"/>
    </location>
</feature>
<feature type="helix" evidence="32">
    <location>
        <begin position="117"/>
        <end position="121"/>
    </location>
</feature>
<feature type="turn" evidence="32">
    <location>
        <begin position="124"/>
        <end position="126"/>
    </location>
</feature>
<feature type="strand" evidence="32">
    <location>
        <begin position="131"/>
        <end position="135"/>
    </location>
</feature>
<feature type="strand" evidence="32">
    <location>
        <begin position="143"/>
        <end position="146"/>
    </location>
</feature>
<feature type="strand" evidence="32">
    <location>
        <begin position="148"/>
        <end position="150"/>
    </location>
</feature>
<feature type="strand" evidence="33">
    <location>
        <begin position="161"/>
        <end position="168"/>
    </location>
</feature>
<feature type="strand" evidence="33">
    <location>
        <begin position="178"/>
        <end position="181"/>
    </location>
</feature>
<feature type="strand" evidence="33">
    <location>
        <begin position="184"/>
        <end position="194"/>
    </location>
</feature>
<feature type="strand" evidence="33">
    <location>
        <begin position="196"/>
        <end position="207"/>
    </location>
</feature>
<feature type="helix" evidence="27">
    <location>
        <begin position="209"/>
        <end position="211"/>
    </location>
</feature>
<feature type="helix" evidence="33">
    <location>
        <begin position="212"/>
        <end position="214"/>
    </location>
</feature>
<feature type="strand" evidence="33">
    <location>
        <begin position="221"/>
        <end position="227"/>
    </location>
</feature>
<feature type="strand" evidence="31">
    <location>
        <begin position="237"/>
        <end position="240"/>
    </location>
</feature>
<feature type="helix" evidence="33">
    <location>
        <begin position="244"/>
        <end position="246"/>
    </location>
</feature>
<feature type="strand" evidence="33">
    <location>
        <begin position="247"/>
        <end position="253"/>
    </location>
</feature>
<feature type="strand" evidence="27">
    <location>
        <begin position="257"/>
        <end position="259"/>
    </location>
</feature>
<feature type="strand" evidence="33">
    <location>
        <begin position="267"/>
        <end position="273"/>
    </location>
</feature>
<feature type="helix" evidence="33">
    <location>
        <begin position="274"/>
        <end position="277"/>
    </location>
</feature>
<feature type="strand" evidence="33">
    <location>
        <begin position="281"/>
        <end position="288"/>
    </location>
</feature>
<feature type="turn" evidence="33">
    <location>
        <begin position="295"/>
        <end position="297"/>
    </location>
</feature>
<feature type="strand" evidence="33">
    <location>
        <begin position="298"/>
        <end position="302"/>
    </location>
</feature>
<feature type="strand" evidence="33">
    <location>
        <begin position="305"/>
        <end position="315"/>
    </location>
</feature>
<feature type="turn" evidence="31">
    <location>
        <begin position="317"/>
        <end position="319"/>
    </location>
</feature>
<feature type="strand" evidence="33">
    <location>
        <begin position="321"/>
        <end position="327"/>
    </location>
</feature>
<feature type="helix" evidence="33">
    <location>
        <begin position="329"/>
        <end position="334"/>
    </location>
</feature>
<feature type="strand" evidence="33">
    <location>
        <begin position="336"/>
        <end position="338"/>
    </location>
</feature>
<feature type="strand" evidence="33">
    <location>
        <begin position="340"/>
        <end position="344"/>
    </location>
</feature>
<feature type="strand" evidence="31">
    <location>
        <begin position="350"/>
        <end position="352"/>
    </location>
</feature>
<feature type="helix" evidence="33">
    <location>
        <begin position="357"/>
        <end position="360"/>
    </location>
</feature>
<feature type="strand" evidence="33">
    <location>
        <begin position="363"/>
        <end position="367"/>
    </location>
</feature>
<feature type="strand" evidence="33">
    <location>
        <begin position="371"/>
        <end position="373"/>
    </location>
</feature>
<feature type="strand" evidence="33">
    <location>
        <begin position="375"/>
        <end position="381"/>
    </location>
</feature>
<feature type="helix" evidence="31">
    <location>
        <begin position="382"/>
        <end position="385"/>
    </location>
</feature>
<feature type="turn" evidence="31">
    <location>
        <begin position="386"/>
        <end position="388"/>
    </location>
</feature>
<feature type="strand" evidence="31">
    <location>
        <begin position="389"/>
        <end position="391"/>
    </location>
</feature>
<feature type="strand" evidence="31">
    <location>
        <begin position="393"/>
        <end position="401"/>
    </location>
</feature>
<feature type="strand" evidence="31">
    <location>
        <begin position="410"/>
        <end position="413"/>
    </location>
</feature>
<feature type="strand" evidence="31">
    <location>
        <begin position="416"/>
        <end position="426"/>
    </location>
</feature>
<feature type="strand" evidence="31">
    <location>
        <begin position="431"/>
        <end position="437"/>
    </location>
</feature>
<feature type="helix" evidence="31">
    <location>
        <begin position="439"/>
        <end position="444"/>
    </location>
</feature>
<feature type="strand" evidence="31">
    <location>
        <begin position="449"/>
        <end position="453"/>
    </location>
</feature>
<feature type="strand" evidence="34">
    <location>
        <begin position="458"/>
        <end position="460"/>
    </location>
</feature>
<feature type="strand" evidence="34">
    <location>
        <begin position="467"/>
        <end position="470"/>
    </location>
</feature>
<feature type="helix" evidence="31">
    <location>
        <begin position="473"/>
        <end position="478"/>
    </location>
</feature>
<feature type="strand" evidence="31">
    <location>
        <begin position="481"/>
        <end position="485"/>
    </location>
</feature>
<feature type="strand" evidence="31">
    <location>
        <begin position="493"/>
        <end position="496"/>
    </location>
</feature>
<feature type="strand" evidence="31">
    <location>
        <begin position="498"/>
        <end position="500"/>
    </location>
</feature>
<feature type="helix" evidence="31">
    <location>
        <begin position="501"/>
        <end position="505"/>
    </location>
</feature>
<feature type="helix" evidence="27">
    <location>
        <begin position="506"/>
        <end position="508"/>
    </location>
</feature>
<feature type="strand" evidence="34">
    <location>
        <begin position="510"/>
        <end position="512"/>
    </location>
</feature>
<feature type="strand" evidence="28">
    <location>
        <begin position="516"/>
        <end position="523"/>
    </location>
</feature>
<feature type="strand" evidence="29">
    <location>
        <begin position="525"/>
        <end position="527"/>
    </location>
</feature>
<feature type="strand" evidence="28">
    <location>
        <begin position="532"/>
        <end position="548"/>
    </location>
</feature>
<feature type="strand" evidence="28">
    <location>
        <begin position="550"/>
        <end position="559"/>
    </location>
</feature>
<feature type="helix" evidence="28">
    <location>
        <begin position="561"/>
        <end position="566"/>
    </location>
</feature>
<feature type="strand" evidence="28">
    <location>
        <begin position="569"/>
        <end position="575"/>
    </location>
</feature>
<feature type="strand" evidence="34">
    <location>
        <begin position="580"/>
        <end position="582"/>
    </location>
</feature>
<feature type="strand" evidence="34">
    <location>
        <begin position="588"/>
        <end position="590"/>
    </location>
</feature>
<feature type="helix" evidence="28">
    <location>
        <begin position="597"/>
        <end position="600"/>
    </location>
</feature>
<feature type="strand" evidence="28">
    <location>
        <begin position="602"/>
        <end position="607"/>
    </location>
</feature>
<feature type="strand" evidence="28">
    <location>
        <begin position="612"/>
        <end position="619"/>
    </location>
</feature>
<feature type="strand" evidence="28">
    <location>
        <begin position="623"/>
        <end position="626"/>
    </location>
</feature>
<feature type="helix" evidence="28">
    <location>
        <begin position="627"/>
        <end position="631"/>
    </location>
</feature>
<feature type="strand" evidence="28">
    <location>
        <begin position="634"/>
        <end position="642"/>
    </location>
</feature>
<feature type="strand" evidence="28">
    <location>
        <begin position="652"/>
        <end position="655"/>
    </location>
</feature>
<feature type="strand" evidence="28">
    <location>
        <begin position="658"/>
        <end position="663"/>
    </location>
</feature>
<feature type="strand" evidence="28">
    <location>
        <begin position="667"/>
        <end position="669"/>
    </location>
</feature>
<feature type="turn" evidence="28">
    <location>
        <begin position="670"/>
        <end position="673"/>
    </location>
</feature>
<feature type="strand" evidence="28">
    <location>
        <begin position="674"/>
        <end position="681"/>
    </location>
</feature>
<feature type="turn" evidence="28">
    <location>
        <begin position="683"/>
        <end position="688"/>
    </location>
</feature>
<feature type="strand" evidence="28">
    <location>
        <begin position="689"/>
        <end position="691"/>
    </location>
</feature>
<feature type="strand" evidence="28">
    <location>
        <begin position="695"/>
        <end position="699"/>
    </location>
</feature>
<feature type="strand" evidence="28">
    <location>
        <begin position="702"/>
        <end position="704"/>
    </location>
</feature>
<feature type="strand" evidence="28">
    <location>
        <begin position="707"/>
        <end position="709"/>
    </location>
</feature>
<feature type="helix" evidence="28">
    <location>
        <begin position="711"/>
        <end position="714"/>
    </location>
</feature>
<feature type="strand" evidence="28">
    <location>
        <begin position="718"/>
        <end position="722"/>
    </location>
</feature>
<feature type="strand" evidence="28">
    <location>
        <begin position="731"/>
        <end position="736"/>
    </location>
</feature>
<feature type="helix" evidence="30">
    <location>
        <begin position="742"/>
        <end position="744"/>
    </location>
</feature>
<feature type="strand" evidence="28">
    <location>
        <begin position="745"/>
        <end position="747"/>
    </location>
</feature>
<feature type="strand" evidence="28">
    <location>
        <begin position="749"/>
        <end position="755"/>
    </location>
</feature>
<feature type="strand" evidence="28">
    <location>
        <begin position="765"/>
        <end position="768"/>
    </location>
</feature>
<feature type="strand" evidence="28">
    <location>
        <begin position="771"/>
        <end position="780"/>
    </location>
</feature>
<feature type="strand" evidence="30">
    <location>
        <begin position="783"/>
        <end position="786"/>
    </location>
</feature>
<feature type="strand" evidence="28">
    <location>
        <begin position="787"/>
        <end position="794"/>
    </location>
</feature>
<feature type="helix" evidence="28">
    <location>
        <begin position="799"/>
        <end position="801"/>
    </location>
</feature>
<feature type="strand" evidence="30">
    <location>
        <begin position="803"/>
        <end position="805"/>
    </location>
</feature>
<feature type="strand" evidence="28">
    <location>
        <begin position="808"/>
        <end position="811"/>
    </location>
</feature>
<feature type="strand" evidence="29">
    <location>
        <begin position="820"/>
        <end position="822"/>
    </location>
</feature>
<feature type="helix" evidence="28">
    <location>
        <begin position="831"/>
        <end position="833"/>
    </location>
</feature>
<feature type="strand" evidence="28">
    <location>
        <begin position="837"/>
        <end position="839"/>
    </location>
</feature>
<feature type="strand" evidence="28">
    <location>
        <begin position="857"/>
        <end position="860"/>
    </location>
</feature>
<feature type="helix" evidence="30">
    <location>
        <begin position="868"/>
        <end position="870"/>
    </location>
</feature>
<comment type="function">
    <text evidence="2 3 4 5 6">Forms a tunnel that spans the entire periplasmic space (PubMed:28388411, PubMed:31870848, PubMed:32359438). Is probably involved in the transport of lipids between the inner membrane and the outer membrane through the tunnel (PubMed:28388411, PubMed:31870848, PubMed:32359438). Forms a dynamic tunnel sufficiently long to mediate lipid transport directly between the two membranes without the need for a shuttle protein (PubMed:32359438). Binds phospholipids (PubMed:28388411, PubMed:31870848, PubMed:32359438). Lipids bind inside the tunnel (PubMed:32359438). Required for outer membrane homeostasis (PubMed:28819315). Contributes to membrane integrity (PubMed:27795327).</text>
</comment>
<comment type="subunit">
    <text evidence="3 5 6 7 12 13">Homohexamer (PubMed:28388411, PubMed:31870848, PubMed:32359438, PubMed:35077766). May interact with LetA in the inner membrane (Probable). May also interact with partners in the outer membrane (Probable).</text>
</comment>
<comment type="subcellular location">
    <subcellularLocation>
        <location evidence="4">Cell inner membrane</location>
        <topology evidence="1">Single-pass membrane protein</topology>
        <orientation evidence="2 6">Periplasmic side</orientation>
    </subcellularLocation>
</comment>
<comment type="induction">
    <text evidence="2">Induced by a defect in lipopolysaccharide molecules.</text>
</comment>
<comment type="domain">
    <text evidence="3 5 6 7">The seven MCE (Mammalian Cell Entry) domains of a single protomer of LetB resemble seven beads on a string (PubMed:32359438). Six copies of this linearly configured protomer associate laterally to form a homohexameric assembly (PubMed:32359438, PubMed:35077766). The LetB hexamers form an elongated tube consisting of seven stacked MCE rings, each formed from the association of six identical MCE domains, with a central tunnel (PubMed:28388411, PubMed:31870848, PubMed:32359438, PubMed:35077766). Rings 1, 5, 6 and 7 are dynamic and adopt open and closed states (PubMed:32359438). Studies with shorter mutant forms of LetB show that a five- or six-ring form of LetB is functional, but that the four-, three- and two-rings variants are stable and properly folded in vitro, but not functional (PubMed:32359438). Mutants lacking ring 1, ring 2, ring 5 or ring 7 are non functional (PubMed:35077766). Mutants lacking ring 6 or ring 3 are more resistant to lauryl sulfobetaine (LSB) and cholate (PubMed:35077766).</text>
</comment>
<comment type="disruption phenotype">
    <text evidence="4">The letAB mutant is not sensitive to lauryl sulfobetaine (LSB), but the pqiAB-letAB double mutant is more sensitive to LSB than the pqiAB mutant (PubMed:28819315). Double mutation also increases sensitivity of the pqiAB mutant to caprylyl sulfobetaine (PubMed:28819315).</text>
</comment>
<comment type="similarity">
    <text evidence="11">Belongs to the PqiB family.</text>
</comment>
<name>LETB_ECOLI</name>
<dbReference type="EMBL" id="U00096">
    <property type="protein sequence ID" value="AAC74904.2"/>
    <property type="molecule type" value="Genomic_DNA"/>
</dbReference>
<dbReference type="EMBL" id="AP009048">
    <property type="protein sequence ID" value="BAA15647.1"/>
    <property type="molecule type" value="Genomic_DNA"/>
</dbReference>
<dbReference type="PIR" id="B64945">
    <property type="entry name" value="B64945"/>
</dbReference>
<dbReference type="RefSeq" id="NP_416348.2">
    <property type="nucleotide sequence ID" value="NC_000913.3"/>
</dbReference>
<dbReference type="RefSeq" id="WP_001326728.1">
    <property type="nucleotide sequence ID" value="NZ_SSZK01000001.1"/>
</dbReference>
<dbReference type="PDB" id="6KZ3">
    <property type="method" value="EM"/>
    <property type="resolution" value="3.10 A"/>
    <property type="chains" value="A/B/C/D/E/F=46-509"/>
</dbReference>
<dbReference type="PDB" id="6KZ4">
    <property type="method" value="EM"/>
    <property type="resolution" value="3.00 A"/>
    <property type="chains" value="A/B/C/D/E/F=512-877"/>
</dbReference>
<dbReference type="PDB" id="6V0C">
    <property type="method" value="EM"/>
    <property type="resolution" value="3.46 A"/>
    <property type="chains" value="A/B/C/D/E/F=46-877"/>
</dbReference>
<dbReference type="PDB" id="6V0D">
    <property type="method" value="EM"/>
    <property type="resolution" value="3.49 A"/>
    <property type="chains" value="A/B/C/D/E/F=46-877"/>
</dbReference>
<dbReference type="PDB" id="6V0E">
    <property type="method" value="EM"/>
    <property type="resolution" value="3.06 A"/>
    <property type="chains" value="A/B/C/D/E/F=46-877"/>
</dbReference>
<dbReference type="PDB" id="6V0F">
    <property type="method" value="EM"/>
    <property type="resolution" value="2.96 A"/>
    <property type="chains" value="A/B/C/D/E/F=46-877"/>
</dbReference>
<dbReference type="PDB" id="6V0G">
    <property type="method" value="EM"/>
    <property type="resolution" value="3.03 A"/>
    <property type="chains" value="A/B/C/D/E/F=46-877"/>
</dbReference>
<dbReference type="PDB" id="6V0H">
    <property type="method" value="EM"/>
    <property type="resolution" value="3.60 A"/>
    <property type="chains" value="A/B/C/D/E/F=46-877"/>
</dbReference>
<dbReference type="PDB" id="6V0I">
    <property type="method" value="EM"/>
    <property type="resolution" value="3.43 A"/>
    <property type="chains" value="A/B/C/D/E/F=46-877"/>
</dbReference>
<dbReference type="PDB" id="6V0J">
    <property type="method" value="EM"/>
    <property type="resolution" value="3.78 A"/>
    <property type="chains" value="A/B/C/D/E/F=46-877"/>
</dbReference>
<dbReference type="PDB" id="6VCI">
    <property type="method" value="X-ray"/>
    <property type="resolution" value="2.15 A"/>
    <property type="chains" value="A/C=159-383"/>
</dbReference>
<dbReference type="PDB" id="7SEE">
    <property type="method" value="EM"/>
    <property type="resolution" value="3.20 A"/>
    <property type="chains" value="A/B/C/D/E/F=42-877"/>
</dbReference>
<dbReference type="PDB" id="7SEF">
    <property type="method" value="EM"/>
    <property type="resolution" value="3.55 A"/>
    <property type="chains" value="A/B/C/D/E/F=42-877"/>
</dbReference>
<dbReference type="PDBsum" id="6KZ3"/>
<dbReference type="PDBsum" id="6KZ4"/>
<dbReference type="PDBsum" id="6V0C"/>
<dbReference type="PDBsum" id="6V0D"/>
<dbReference type="PDBsum" id="6V0E"/>
<dbReference type="PDBsum" id="6V0F"/>
<dbReference type="PDBsum" id="6V0G"/>
<dbReference type="PDBsum" id="6V0H"/>
<dbReference type="PDBsum" id="6V0I"/>
<dbReference type="PDBsum" id="6V0J"/>
<dbReference type="PDBsum" id="6VCI"/>
<dbReference type="PDBsum" id="7SEE"/>
<dbReference type="PDBsum" id="7SEF"/>
<dbReference type="EMDB" id="EMD-0784"/>
<dbReference type="EMDB" id="EMD-0785"/>
<dbReference type="EMDB" id="EMD-0786"/>
<dbReference type="EMDB" id="EMD-0787"/>
<dbReference type="EMDB" id="EMD-20993"/>
<dbReference type="EMDB" id="EMD-20994"/>
<dbReference type="EMDB" id="EMD-20995"/>
<dbReference type="EMDB" id="EMD-20996"/>
<dbReference type="EMDB" id="EMD-20997"/>
<dbReference type="EMDB" id="EMD-20998"/>
<dbReference type="EMDB" id="EMD-20999"/>
<dbReference type="EMDB" id="EMD-21000"/>
<dbReference type="EMDB" id="EMD-25066"/>
<dbReference type="EMDB" id="EMD-25067"/>
<dbReference type="SMR" id="P76272"/>
<dbReference type="BioGRID" id="4259157">
    <property type="interactions" value="14"/>
</dbReference>
<dbReference type="BioGRID" id="850709">
    <property type="interactions" value="1"/>
</dbReference>
<dbReference type="DIP" id="DIP-11815N"/>
<dbReference type="FunCoup" id="P76272">
    <property type="interactions" value="113"/>
</dbReference>
<dbReference type="IntAct" id="P76272">
    <property type="interactions" value="6"/>
</dbReference>
<dbReference type="STRING" id="511145.b1834"/>
<dbReference type="TCDB" id="9.A.69.1.2">
    <property type="family name" value="the intermembrane phospholipid translocase (impl-t) family"/>
</dbReference>
<dbReference type="jPOST" id="P76272"/>
<dbReference type="PaxDb" id="511145-b1834"/>
<dbReference type="EnsemblBacteria" id="AAC74904">
    <property type="protein sequence ID" value="AAC74904"/>
    <property type="gene ID" value="b1834"/>
</dbReference>
<dbReference type="GeneID" id="946352"/>
<dbReference type="KEGG" id="ecj:JW1823"/>
<dbReference type="KEGG" id="eco:b1834"/>
<dbReference type="KEGG" id="ecoc:C3026_10450"/>
<dbReference type="PATRIC" id="fig|511145.12.peg.1912"/>
<dbReference type="EchoBASE" id="EB3776"/>
<dbReference type="eggNOG" id="COG3008">
    <property type="taxonomic scope" value="Bacteria"/>
</dbReference>
<dbReference type="HOGENOM" id="CLU_015836_0_0_6"/>
<dbReference type="InParanoid" id="P76272"/>
<dbReference type="OMA" id="RFWNISG"/>
<dbReference type="OrthoDB" id="9806984at2"/>
<dbReference type="PhylomeDB" id="P76272"/>
<dbReference type="BioCyc" id="EcoCyc:G7007-MONOMER"/>
<dbReference type="PRO" id="PR:P76272"/>
<dbReference type="Proteomes" id="UP000000625">
    <property type="component" value="Chromosome"/>
</dbReference>
<dbReference type="GO" id="GO:0030288">
    <property type="term" value="C:outer membrane-bounded periplasmic space"/>
    <property type="evidence" value="ECO:0000314"/>
    <property type="project" value="EcoCyc"/>
</dbReference>
<dbReference type="GO" id="GO:0005886">
    <property type="term" value="C:plasma membrane"/>
    <property type="evidence" value="ECO:0000314"/>
    <property type="project" value="EcoCyc"/>
</dbReference>
<dbReference type="GO" id="GO:0042802">
    <property type="term" value="F:identical protein binding"/>
    <property type="evidence" value="ECO:0000314"/>
    <property type="project" value="EcoCyc"/>
</dbReference>
<dbReference type="GO" id="GO:0120009">
    <property type="term" value="P:intermembrane lipid transfer"/>
    <property type="evidence" value="ECO:0000314"/>
    <property type="project" value="EcoCyc"/>
</dbReference>
<dbReference type="GO" id="GO:0061024">
    <property type="term" value="P:membrane organization"/>
    <property type="evidence" value="ECO:0000318"/>
    <property type="project" value="GO_Central"/>
</dbReference>
<dbReference type="InterPro" id="IPR003399">
    <property type="entry name" value="Mce/MlaD"/>
</dbReference>
<dbReference type="InterPro" id="IPR051800">
    <property type="entry name" value="PqiA-PqiB_transport"/>
</dbReference>
<dbReference type="PANTHER" id="PTHR30462">
    <property type="entry name" value="INTERMEMBRANE TRANSPORT PROTEIN PQIB-RELATED"/>
    <property type="match status" value="1"/>
</dbReference>
<dbReference type="PANTHER" id="PTHR30462:SF0">
    <property type="entry name" value="INTERMEMBRANE TRANSPORT PROTEIN YEBT"/>
    <property type="match status" value="1"/>
</dbReference>
<dbReference type="Pfam" id="PF02470">
    <property type="entry name" value="MlaD"/>
    <property type="match status" value="6"/>
</dbReference>